<gene>
    <name evidence="5" type="primary">NRR</name>
    <name evidence="9" type="ordered locus">Os01g0130200</name>
    <name evidence="6" type="ordered locus">LOC_Os01g03940</name>
    <name evidence="8" type="ORF">P0408F06.32</name>
    <name evidence="7" type="ORF">P0504H10.7</name>
</gene>
<protein>
    <recommendedName>
        <fullName evidence="5">Protein NEGATIVE REGULATOR OF RESISTANCE</fullName>
    </recommendedName>
    <alternativeName>
        <fullName evidence="6">NPR1-interactor</fullName>
    </alternativeName>
</protein>
<organism>
    <name type="scientific">Oryza sativa subsp. japonica</name>
    <name type="common">Rice</name>
    <dbReference type="NCBI Taxonomy" id="39947"/>
    <lineage>
        <taxon>Eukaryota</taxon>
        <taxon>Viridiplantae</taxon>
        <taxon>Streptophyta</taxon>
        <taxon>Embryophyta</taxon>
        <taxon>Tracheophyta</taxon>
        <taxon>Spermatophyta</taxon>
        <taxon>Magnoliopsida</taxon>
        <taxon>Liliopsida</taxon>
        <taxon>Poales</taxon>
        <taxon>Poaceae</taxon>
        <taxon>BOP clade</taxon>
        <taxon>Oryzoideae</taxon>
        <taxon>Oryzeae</taxon>
        <taxon>Oryzinae</taxon>
        <taxon>Oryza</taxon>
        <taxon>Oryza sativa</taxon>
    </lineage>
</organism>
<accession>Q5ZEF1</accession>
<keyword id="KW-0539">Nucleus</keyword>
<keyword id="KW-0611">Plant defense</keyword>
<keyword id="KW-1185">Reference proteome</keyword>
<proteinExistence type="evidence at protein level"/>
<feature type="chain" id="PRO_0000437008" description="Protein NEGATIVE REGULATOR OF RESISTANCE">
    <location>
        <begin position="1"/>
        <end position="127"/>
    </location>
</feature>
<feature type="region of interest" description="Disordered" evidence="1">
    <location>
        <begin position="1"/>
        <end position="28"/>
    </location>
</feature>
<feature type="region of interest" description="Disordered" evidence="1">
    <location>
        <begin position="47"/>
        <end position="127"/>
    </location>
</feature>
<feature type="compositionally biased region" description="Low complexity" evidence="1">
    <location>
        <begin position="112"/>
        <end position="127"/>
    </location>
</feature>
<feature type="mutagenesis site" description="Slightly reduces NPR1/NH1 binding efficiency." evidence="2">
    <original>E</original>
    <variation>K</variation>
    <location>
        <position position="35"/>
    </location>
</feature>
<feature type="mutagenesis site" description="Slightly reduces NPR1/NH1 binding efficiency." evidence="2">
    <original>F</original>
    <variation>G</variation>
    <location>
        <position position="36"/>
    </location>
</feature>
<feature type="mutagenesis site" description="Slightly reduces NPR1/NH1 binding efficiency." evidence="2">
    <original>L</original>
    <variation>G</variation>
    <location>
        <position position="40"/>
    </location>
</feature>
<feature type="mutagenesis site" description="Abolishes interaction with NPR1/NH1 and repression of NPR1/NH1-mediated transcriptional activation of LG2; when associated with A-66." evidence="3">
    <original>W</original>
    <variation>A</variation>
    <location>
        <position position="62"/>
    </location>
</feature>
<feature type="mutagenesis site" description="Abolishes interaction with NPR1/NH1 and repression of NPR1/NH1-mediated transcriptional activation of LG2;; when associated with A-62." evidence="3">
    <original>F</original>
    <variation>A</variation>
    <location>
        <position position="66"/>
    </location>
</feature>
<feature type="mutagenesis site" description="Increases NPR1/NH1 binding efficiency and repression of NPR1/NH1-mediated transcriptional activation of LG2." evidence="3">
    <original>DL</original>
    <variation>AA</variation>
    <location>
        <begin position="107"/>
        <end position="108"/>
    </location>
</feature>
<reference key="1">
    <citation type="journal article" date="2002" name="Nature">
        <title>The genome sequence and structure of rice chromosome 1.</title>
        <authorList>
            <person name="Sasaki T."/>
            <person name="Matsumoto T."/>
            <person name="Yamamoto K."/>
            <person name="Sakata K."/>
            <person name="Baba T."/>
            <person name="Katayose Y."/>
            <person name="Wu J."/>
            <person name="Niimura Y."/>
            <person name="Cheng Z."/>
            <person name="Nagamura Y."/>
            <person name="Antonio B.A."/>
            <person name="Kanamori H."/>
            <person name="Hosokawa S."/>
            <person name="Masukawa M."/>
            <person name="Arikawa K."/>
            <person name="Chiden Y."/>
            <person name="Hayashi M."/>
            <person name="Okamoto M."/>
            <person name="Ando T."/>
            <person name="Aoki H."/>
            <person name="Arita K."/>
            <person name="Hamada M."/>
            <person name="Harada C."/>
            <person name="Hijishita S."/>
            <person name="Honda M."/>
            <person name="Ichikawa Y."/>
            <person name="Idonuma A."/>
            <person name="Iijima M."/>
            <person name="Ikeda M."/>
            <person name="Ikeno M."/>
            <person name="Ito S."/>
            <person name="Ito T."/>
            <person name="Ito Y."/>
            <person name="Ito Y."/>
            <person name="Iwabuchi A."/>
            <person name="Kamiya K."/>
            <person name="Karasawa W."/>
            <person name="Katagiri S."/>
            <person name="Kikuta A."/>
            <person name="Kobayashi N."/>
            <person name="Kono I."/>
            <person name="Machita K."/>
            <person name="Maehara T."/>
            <person name="Mizuno H."/>
            <person name="Mizubayashi T."/>
            <person name="Mukai Y."/>
            <person name="Nagasaki H."/>
            <person name="Nakashima M."/>
            <person name="Nakama Y."/>
            <person name="Nakamichi Y."/>
            <person name="Nakamura M."/>
            <person name="Namiki N."/>
            <person name="Negishi M."/>
            <person name="Ohta I."/>
            <person name="Ono N."/>
            <person name="Saji S."/>
            <person name="Sakai K."/>
            <person name="Shibata M."/>
            <person name="Shimokawa T."/>
            <person name="Shomura A."/>
            <person name="Song J."/>
            <person name="Takazaki Y."/>
            <person name="Terasawa K."/>
            <person name="Tsuji K."/>
            <person name="Waki K."/>
            <person name="Yamagata H."/>
            <person name="Yamane H."/>
            <person name="Yoshiki S."/>
            <person name="Yoshihara R."/>
            <person name="Yukawa K."/>
            <person name="Zhong H."/>
            <person name="Iwama H."/>
            <person name="Endo T."/>
            <person name="Ito H."/>
            <person name="Hahn J.H."/>
            <person name="Kim H.-I."/>
            <person name="Eun M.-Y."/>
            <person name="Yano M."/>
            <person name="Jiang J."/>
            <person name="Gojobori T."/>
        </authorList>
    </citation>
    <scope>NUCLEOTIDE SEQUENCE [LARGE SCALE GENOMIC DNA]</scope>
    <source>
        <strain>cv. Nipponbare</strain>
    </source>
</reference>
<reference key="2">
    <citation type="journal article" date="2005" name="Nature">
        <title>The map-based sequence of the rice genome.</title>
        <authorList>
            <consortium name="International rice genome sequencing project (IRGSP)"/>
        </authorList>
    </citation>
    <scope>NUCLEOTIDE SEQUENCE [LARGE SCALE GENOMIC DNA]</scope>
    <source>
        <strain>cv. Nipponbare</strain>
    </source>
</reference>
<reference key="3">
    <citation type="journal article" date="2013" name="Rice">
        <title>Improvement of the Oryza sativa Nipponbare reference genome using next generation sequence and optical map data.</title>
        <authorList>
            <person name="Kawahara Y."/>
            <person name="de la Bastide M."/>
            <person name="Hamilton J.P."/>
            <person name="Kanamori H."/>
            <person name="McCombie W.R."/>
            <person name="Ouyang S."/>
            <person name="Schwartz D.C."/>
            <person name="Tanaka T."/>
            <person name="Wu J."/>
            <person name="Zhou S."/>
            <person name="Childs K.L."/>
            <person name="Davidson R.M."/>
            <person name="Lin H."/>
            <person name="Quesada-Ocampo L."/>
            <person name="Vaillancourt B."/>
            <person name="Sakai H."/>
            <person name="Lee S.S."/>
            <person name="Kim J."/>
            <person name="Numa H."/>
            <person name="Itoh T."/>
            <person name="Buell C.R."/>
            <person name="Matsumoto T."/>
        </authorList>
    </citation>
    <scope>GENOME REANNOTATION</scope>
    <source>
        <strain>cv. Nipponbare</strain>
    </source>
</reference>
<reference key="4">
    <citation type="journal article" date="2005" name="Plant J.">
        <title>Rice NRR, a negative regulator of disease resistance, interacts with Arabidopsis NPR1 and rice NH1.</title>
        <authorList>
            <person name="Chern M."/>
            <person name="Canlas P.E."/>
            <person name="Fitzgerald H.A."/>
            <person name="Ronald P.C."/>
        </authorList>
    </citation>
    <scope>FUNCTION</scope>
    <scope>INTERACTION WITH NPR1/NH1</scope>
    <scope>SUBCELLULAR LOCATION</scope>
    <scope>MUTAGENESIS OF GLU-35; PHE-36 AND LEU-40</scope>
</reference>
<reference key="5">
    <citation type="journal article" date="2012" name="Plant Methods">
        <title>A rice transient assay system identifies a novel domain in NRR required for interaction with NH1/OsNPR1 and inhibition of NH1-mediated transcriptional activation.</title>
        <authorList>
            <person name="Chern M."/>
            <person name="Bai W."/>
            <person name="Sze-To W.H."/>
            <person name="Canlas P.E."/>
            <person name="Bartley L.E."/>
            <person name="Ronald P.C."/>
        </authorList>
    </citation>
    <scope>FUNCTION</scope>
    <scope>INTERACTION WITH NPR1/NH1</scope>
    <scope>MUTAGENESIS OF TRP-62; PHE-66 AND 107-ASP-LEU-108</scope>
</reference>
<reference key="6">
    <citation type="journal article" date="2014" name="BMC Genomics">
        <title>Interaction specificity and coexpression of rice NPR1 homologs 1 and 3 (NH1 and NH3), TGA transcription factors and negative regulator of resistance (NRR) proteins.</title>
        <authorList>
            <person name="Chern M."/>
            <person name="Bai W."/>
            <person name="Ruan D."/>
            <person name="Oh T."/>
            <person name="Chen X."/>
            <person name="Ronald P.C."/>
        </authorList>
    </citation>
    <scope>INTERACTION WITH NPR1/NH1 AND NPR3/NH3</scope>
</reference>
<dbReference type="EMBL" id="AP002526">
    <property type="protein sequence ID" value="BAD52461.1"/>
    <property type="molecule type" value="Genomic_DNA"/>
</dbReference>
<dbReference type="EMBL" id="AP002538">
    <property type="protein sequence ID" value="BAD52486.1"/>
    <property type="molecule type" value="Genomic_DNA"/>
</dbReference>
<dbReference type="EMBL" id="AP014957">
    <property type="protein sequence ID" value="BAS70208.1"/>
    <property type="molecule type" value="Genomic_DNA"/>
</dbReference>
<dbReference type="RefSeq" id="XP_015631290.1">
    <property type="nucleotide sequence ID" value="XM_015775804.1"/>
</dbReference>
<dbReference type="SMR" id="Q5ZEF1"/>
<dbReference type="STRING" id="39947.Q5ZEF1"/>
<dbReference type="PaxDb" id="39947-Q5ZEF1"/>
<dbReference type="EnsemblPlants" id="Os01t0130200-00">
    <property type="protein sequence ID" value="Os01t0130200-00"/>
    <property type="gene ID" value="Os01g0130200"/>
</dbReference>
<dbReference type="Gramene" id="Os01t0130200-00">
    <property type="protein sequence ID" value="Os01t0130200-00"/>
    <property type="gene ID" value="Os01g0130200"/>
</dbReference>
<dbReference type="eggNOG" id="ENOG502SWTX">
    <property type="taxonomic scope" value="Eukaryota"/>
</dbReference>
<dbReference type="HOGENOM" id="CLU_146278_0_0_1"/>
<dbReference type="InParanoid" id="Q5ZEF1"/>
<dbReference type="OMA" id="CWEDFAD"/>
<dbReference type="OrthoDB" id="1098796at2759"/>
<dbReference type="Proteomes" id="UP000000763">
    <property type="component" value="Chromosome 1"/>
</dbReference>
<dbReference type="Proteomes" id="UP000059680">
    <property type="component" value="Chromosome 1"/>
</dbReference>
<dbReference type="GO" id="GO:0005634">
    <property type="term" value="C:nucleus"/>
    <property type="evidence" value="ECO:0000314"/>
    <property type="project" value="UniProtKB"/>
</dbReference>
<dbReference type="GO" id="GO:0042742">
    <property type="term" value="P:defense response to bacterium"/>
    <property type="evidence" value="ECO:0000315"/>
    <property type="project" value="UniProtKB"/>
</dbReference>
<dbReference type="GO" id="GO:0010112">
    <property type="term" value="P:regulation of systemic acquired resistance"/>
    <property type="evidence" value="ECO:0007669"/>
    <property type="project" value="InterPro"/>
</dbReference>
<dbReference type="InterPro" id="IPR031425">
    <property type="entry name" value="NPR1/NH1-interacting"/>
</dbReference>
<dbReference type="PANTHER" id="PTHR33669">
    <property type="entry name" value="PROTEIN NEGATIVE REGULATOR OF RESISTANCE"/>
    <property type="match status" value="1"/>
</dbReference>
<dbReference type="PANTHER" id="PTHR33669:SF12">
    <property type="entry name" value="PROTEIN NEGATIVE REGULATOR OF RESISTANCE"/>
    <property type="match status" value="1"/>
</dbReference>
<comment type="function">
    <text evidence="2 3">Acts as a negative regulator of disease resistance. Acts on basal resistance, age-related resistance and resistance mediated by the LRR receptor kinase XA21. Plants over-expressing NRR display enhanced susceptibility to the bacterial blight Xanthomonas oryzae pv. oryzae (Xoo) (PubMed:16115061). Binds to and represses NPR1/NH1-mediated transcriptional activation of LG2 in vitro (PubMed:22353606).</text>
</comment>
<comment type="subunit">
    <text evidence="2 3 4">Interacts with NPR1/NH1 (PubMed:16115061, PubMed:22353606, PubMed:24919709). Interacts with NPR3/NH3 (PubMed:24919709).</text>
</comment>
<comment type="subcellular location">
    <subcellularLocation>
        <location evidence="2">Nucleus</location>
    </subcellularLocation>
</comment>
<comment type="similarity">
    <text>Belongs to the NPR1-interactor family.</text>
</comment>
<sequence>MDATTTAKRKRPAASDIADDAPTTVDEVSDAEVEEFYAILRRMRDATRRLGARPPPPRAPAWRPSFSWEDFADAPPKQAPPPPQQPADHERVAENATPPRRPAPGLDLNVEPPSDAPATPRSARAPA</sequence>
<name>NRR_ORYSJ</name>
<evidence type="ECO:0000256" key="1">
    <source>
        <dbReference type="SAM" id="MobiDB-lite"/>
    </source>
</evidence>
<evidence type="ECO:0000269" key="2">
    <source>
    </source>
</evidence>
<evidence type="ECO:0000269" key="3">
    <source>
    </source>
</evidence>
<evidence type="ECO:0000269" key="4">
    <source>
    </source>
</evidence>
<evidence type="ECO:0000303" key="5">
    <source>
    </source>
</evidence>
<evidence type="ECO:0000305" key="6"/>
<evidence type="ECO:0000312" key="7">
    <source>
        <dbReference type="EMBL" id="BAD52461.1"/>
    </source>
</evidence>
<evidence type="ECO:0000312" key="8">
    <source>
        <dbReference type="EMBL" id="BAD52486.1"/>
    </source>
</evidence>
<evidence type="ECO:0000312" key="9">
    <source>
        <dbReference type="EMBL" id="BAS70208.1"/>
    </source>
</evidence>